<sequence length="339" mass="35762">MQTLQTTSLRVVDNKLWILDQQALPQQKNWLPADNTEALVGHIHALRVRGAPLIGLSASLLLALLAEHGMTRDALGQALEVLRAARPTAVNLMNNLDRMKQALTQPDFVAALGAEALRLVQEDRELCERIARAGSELVKPGSRLLTHCNTGGLATAGVGTALGVIARAHEAGKVANVWVDETRPLLQGGRLTAWELGELGVPYQLITDSMAASLMAQGQVDAVWVGADRIAANGDVANKIGTYSLAVLAKFHNVPFYVAAPQTTLDPACPNGAAIPIEQRAAAEVTGVAGSFGAVQWAPEDARVYNPAFDVTPAALISGWVLDSGVVTPEDVANGRFAG</sequence>
<proteinExistence type="inferred from homology"/>
<keyword id="KW-0028">Amino-acid biosynthesis</keyword>
<keyword id="KW-0413">Isomerase</keyword>
<keyword id="KW-0486">Methionine biosynthesis</keyword>
<keyword id="KW-1185">Reference proteome</keyword>
<dbReference type="EC" id="5.3.1.23" evidence="1"/>
<dbReference type="EMBL" id="CP000783">
    <property type="protein sequence ID" value="ABU76089.1"/>
    <property type="molecule type" value="Genomic_DNA"/>
</dbReference>
<dbReference type="RefSeq" id="WP_012124089.1">
    <property type="nucleotide sequence ID" value="NC_009778.1"/>
</dbReference>
<dbReference type="SMR" id="A7MKX3"/>
<dbReference type="KEGG" id="esa:ESA_00812"/>
<dbReference type="PATRIC" id="fig|290339.8.peg.722"/>
<dbReference type="HOGENOM" id="CLU_016218_1_2_6"/>
<dbReference type="UniPathway" id="UPA00904">
    <property type="reaction ID" value="UER00874"/>
</dbReference>
<dbReference type="Proteomes" id="UP000000260">
    <property type="component" value="Chromosome"/>
</dbReference>
<dbReference type="GO" id="GO:0046523">
    <property type="term" value="F:S-methyl-5-thioribose-1-phosphate isomerase activity"/>
    <property type="evidence" value="ECO:0007669"/>
    <property type="project" value="UniProtKB-UniRule"/>
</dbReference>
<dbReference type="GO" id="GO:0019509">
    <property type="term" value="P:L-methionine salvage from methylthioadenosine"/>
    <property type="evidence" value="ECO:0007669"/>
    <property type="project" value="UniProtKB-UniRule"/>
</dbReference>
<dbReference type="FunFam" id="3.40.50.10470:FF:000006">
    <property type="entry name" value="Methylthioribose-1-phosphate isomerase"/>
    <property type="match status" value="1"/>
</dbReference>
<dbReference type="Gene3D" id="1.20.120.420">
    <property type="entry name" value="translation initiation factor eif-2b, domain 1"/>
    <property type="match status" value="1"/>
</dbReference>
<dbReference type="Gene3D" id="3.40.50.10470">
    <property type="entry name" value="Translation initiation factor eif-2b, domain 2"/>
    <property type="match status" value="1"/>
</dbReference>
<dbReference type="HAMAP" id="MF_01678">
    <property type="entry name" value="Salvage_MtnA"/>
    <property type="match status" value="1"/>
</dbReference>
<dbReference type="InterPro" id="IPR000649">
    <property type="entry name" value="IF-2B-related"/>
</dbReference>
<dbReference type="InterPro" id="IPR005251">
    <property type="entry name" value="IF-M1Pi"/>
</dbReference>
<dbReference type="InterPro" id="IPR042529">
    <property type="entry name" value="IF_2B-like_C"/>
</dbReference>
<dbReference type="InterPro" id="IPR011559">
    <property type="entry name" value="Initiation_fac_2B_a/b/d"/>
</dbReference>
<dbReference type="InterPro" id="IPR027363">
    <property type="entry name" value="M1Pi_N"/>
</dbReference>
<dbReference type="InterPro" id="IPR037171">
    <property type="entry name" value="NagB/RpiA_transferase-like"/>
</dbReference>
<dbReference type="NCBIfam" id="TIGR00524">
    <property type="entry name" value="eIF-2B_rel"/>
    <property type="match status" value="1"/>
</dbReference>
<dbReference type="NCBIfam" id="NF004326">
    <property type="entry name" value="PRK05720.1"/>
    <property type="match status" value="1"/>
</dbReference>
<dbReference type="NCBIfam" id="TIGR00512">
    <property type="entry name" value="salvage_mtnA"/>
    <property type="match status" value="1"/>
</dbReference>
<dbReference type="PANTHER" id="PTHR43475">
    <property type="entry name" value="METHYLTHIORIBOSE-1-PHOSPHATE ISOMERASE"/>
    <property type="match status" value="1"/>
</dbReference>
<dbReference type="PANTHER" id="PTHR43475:SF1">
    <property type="entry name" value="METHYLTHIORIBOSE-1-PHOSPHATE ISOMERASE"/>
    <property type="match status" value="1"/>
</dbReference>
<dbReference type="Pfam" id="PF01008">
    <property type="entry name" value="IF-2B"/>
    <property type="match status" value="1"/>
</dbReference>
<dbReference type="SUPFAM" id="SSF100950">
    <property type="entry name" value="NagB/RpiA/CoA transferase-like"/>
    <property type="match status" value="1"/>
</dbReference>
<protein>
    <recommendedName>
        <fullName evidence="1">Methylthioribose-1-phosphate isomerase</fullName>
        <shortName evidence="1">M1Pi</shortName>
        <shortName evidence="1">MTR-1-P isomerase</shortName>
        <ecNumber evidence="1">5.3.1.23</ecNumber>
    </recommendedName>
    <alternativeName>
        <fullName evidence="1">S-methyl-5-thioribose-1-phosphate isomerase</fullName>
    </alternativeName>
</protein>
<organism>
    <name type="scientific">Cronobacter sakazakii (strain ATCC BAA-894)</name>
    <name type="common">Enterobacter sakazakii</name>
    <dbReference type="NCBI Taxonomy" id="290339"/>
    <lineage>
        <taxon>Bacteria</taxon>
        <taxon>Pseudomonadati</taxon>
        <taxon>Pseudomonadota</taxon>
        <taxon>Gammaproteobacteria</taxon>
        <taxon>Enterobacterales</taxon>
        <taxon>Enterobacteriaceae</taxon>
        <taxon>Cronobacter</taxon>
    </lineage>
</organism>
<accession>A7MKX3</accession>
<feature type="chain" id="PRO_0000357181" description="Methylthioribose-1-phosphate isomerase">
    <location>
        <begin position="1"/>
        <end position="339"/>
    </location>
</feature>
<feature type="active site" description="Proton donor" evidence="1">
    <location>
        <position position="228"/>
    </location>
</feature>
<feature type="binding site" evidence="1">
    <location>
        <begin position="49"/>
        <end position="51"/>
    </location>
    <ligand>
        <name>substrate</name>
    </ligand>
</feature>
<feature type="binding site" evidence="1">
    <location>
        <position position="86"/>
    </location>
    <ligand>
        <name>substrate</name>
    </ligand>
</feature>
<feature type="binding site" evidence="1">
    <location>
        <position position="187"/>
    </location>
    <ligand>
        <name>substrate</name>
    </ligand>
</feature>
<feature type="binding site" evidence="1">
    <location>
        <begin position="238"/>
        <end position="239"/>
    </location>
    <ligand>
        <name>substrate</name>
    </ligand>
</feature>
<feature type="site" description="Transition state stabilizer" evidence="1">
    <location>
        <position position="148"/>
    </location>
</feature>
<comment type="function">
    <text evidence="1">Catalyzes the interconversion of methylthioribose-1-phosphate (MTR-1-P) into methylthioribulose-1-phosphate (MTRu-1-P).</text>
</comment>
<comment type="catalytic activity">
    <reaction evidence="1">
        <text>5-(methylsulfanyl)-alpha-D-ribose 1-phosphate = 5-(methylsulfanyl)-D-ribulose 1-phosphate</text>
        <dbReference type="Rhea" id="RHEA:19989"/>
        <dbReference type="ChEBI" id="CHEBI:58533"/>
        <dbReference type="ChEBI" id="CHEBI:58548"/>
        <dbReference type="EC" id="5.3.1.23"/>
    </reaction>
</comment>
<comment type="pathway">
    <text evidence="1">Amino-acid biosynthesis; L-methionine biosynthesis via salvage pathway; L-methionine from S-methyl-5-thio-alpha-D-ribose 1-phosphate: step 1/6.</text>
</comment>
<comment type="similarity">
    <text evidence="2">Belongs to the eIF-2B alpha/beta/delta subunits family. MtnA subfamily.</text>
</comment>
<reference key="1">
    <citation type="journal article" date="2010" name="PLoS ONE">
        <title>Genome sequence of Cronobacter sakazakii BAA-894 and comparative genomic hybridization analysis with other Cronobacter species.</title>
        <authorList>
            <person name="Kucerova E."/>
            <person name="Clifton S.W."/>
            <person name="Xia X.Q."/>
            <person name="Long F."/>
            <person name="Porwollik S."/>
            <person name="Fulton L."/>
            <person name="Fronick C."/>
            <person name="Minx P."/>
            <person name="Kyung K."/>
            <person name="Warren W."/>
            <person name="Fulton R."/>
            <person name="Feng D."/>
            <person name="Wollam A."/>
            <person name="Shah N."/>
            <person name="Bhonagiri V."/>
            <person name="Nash W.E."/>
            <person name="Hallsworth-Pepin K."/>
            <person name="Wilson R.K."/>
            <person name="McClelland M."/>
            <person name="Forsythe S.J."/>
        </authorList>
    </citation>
    <scope>NUCLEOTIDE SEQUENCE [LARGE SCALE GENOMIC DNA]</scope>
    <source>
        <strain>ATCC BAA-894</strain>
    </source>
</reference>
<name>MTNA_CROS8</name>
<evidence type="ECO:0000255" key="1">
    <source>
        <dbReference type="HAMAP-Rule" id="MF_01678"/>
    </source>
</evidence>
<evidence type="ECO:0000305" key="2"/>
<gene>
    <name evidence="1" type="primary">mtnA</name>
    <name type="ordered locus">ESA_00812</name>
</gene>